<protein>
    <recommendedName>
        <fullName evidence="1">Na(+)/H(+) antiporter NhaB</fullName>
    </recommendedName>
    <alternativeName>
        <fullName evidence="1">Sodium/proton antiporter NhaB</fullName>
    </alternativeName>
</protein>
<accession>Q8ED79</accession>
<proteinExistence type="inferred from homology"/>
<feature type="chain" id="PRO_0000333131" description="Na(+)/H(+) antiporter NhaB">
    <location>
        <begin position="1"/>
        <end position="533"/>
    </location>
</feature>
<feature type="transmembrane region" description="Helical" evidence="1">
    <location>
        <begin position="10"/>
        <end position="30"/>
    </location>
</feature>
<feature type="transmembrane region" description="Helical" evidence="1">
    <location>
        <begin position="67"/>
        <end position="87"/>
    </location>
</feature>
<feature type="transmembrane region" description="Helical" evidence="1">
    <location>
        <begin position="96"/>
        <end position="116"/>
    </location>
</feature>
<feature type="transmembrane region" description="Helical" evidence="1">
    <location>
        <begin position="131"/>
        <end position="165"/>
    </location>
</feature>
<feature type="transmembrane region" description="Helical" evidence="1">
    <location>
        <begin position="209"/>
        <end position="229"/>
    </location>
</feature>
<feature type="transmembrane region" description="Helical" evidence="1">
    <location>
        <begin position="247"/>
        <end position="267"/>
    </location>
</feature>
<feature type="transmembrane region" description="Helical" evidence="1">
    <location>
        <begin position="310"/>
        <end position="330"/>
    </location>
</feature>
<feature type="transmembrane region" description="Helical" evidence="1">
    <location>
        <begin position="355"/>
        <end position="375"/>
    </location>
</feature>
<feature type="transmembrane region" description="Helical" evidence="1">
    <location>
        <begin position="396"/>
        <end position="416"/>
    </location>
</feature>
<feature type="transmembrane region" description="Helical" evidence="1">
    <location>
        <begin position="454"/>
        <end position="474"/>
    </location>
</feature>
<feature type="transmembrane region" description="Helical" evidence="1">
    <location>
        <begin position="485"/>
        <end position="505"/>
    </location>
</feature>
<sequence>MPMTMSQAFIGNFLGNSPKWYKIAILSFLIINPILFFYVSPFVAGWVLVLEFIFTLAMALKCYPLQPGGLLAIEAVAIGMTSASQVLHEIEANLEVLLLLVFMVAGIYFMKQLLLFAFTKMITKVRSKILVSLLFCLASAFLSAFLDALTVIAVIITVAVGFYSIYHKVASGKDFSADHDHTSENKNEEGEDQLNEAELESFRGFLRNLLMHAGVGTALGGVCTMVGEPQNLIIAAQANWQFGEFAIRMSPVTVPVFIAGILTCYIVEKFRIFGYGAQLPDAVHKILCDYDAHEDARRTNKDKMKLIVQAFIGVWLIAGLALHLASVGLIGLSVIILATAFNGITDEHALGKAFEEALPFTALLAVFFSVVAVIIDQQLFAPVIQWALNHEGNTQLVIFYIANGLLSMVSDNVFVGTVYINEVKAALLNGQITRDQFDLLAVAINTGTNLPSVATPNGQAAFLFLLTSALAPLIRLSYGRMVWMALPYTIVLSIVGVMAIQIGFLEQMTQYFYDSHAILHHSVKEALAPATGH</sequence>
<reference key="1">
    <citation type="journal article" date="2002" name="Nat. Biotechnol.">
        <title>Genome sequence of the dissimilatory metal ion-reducing bacterium Shewanella oneidensis.</title>
        <authorList>
            <person name="Heidelberg J.F."/>
            <person name="Paulsen I.T."/>
            <person name="Nelson K.E."/>
            <person name="Gaidos E.J."/>
            <person name="Nelson W.C."/>
            <person name="Read T.D."/>
            <person name="Eisen J.A."/>
            <person name="Seshadri R."/>
            <person name="Ward N.L."/>
            <person name="Methe B.A."/>
            <person name="Clayton R.A."/>
            <person name="Meyer T."/>
            <person name="Tsapin A."/>
            <person name="Scott J."/>
            <person name="Beanan M.J."/>
            <person name="Brinkac L.M."/>
            <person name="Daugherty S.C."/>
            <person name="DeBoy R.T."/>
            <person name="Dodson R.J."/>
            <person name="Durkin A.S."/>
            <person name="Haft D.H."/>
            <person name="Kolonay J.F."/>
            <person name="Madupu R."/>
            <person name="Peterson J.D."/>
            <person name="Umayam L.A."/>
            <person name="White O."/>
            <person name="Wolf A.M."/>
            <person name="Vamathevan J.J."/>
            <person name="Weidman J.F."/>
            <person name="Impraim M."/>
            <person name="Lee K."/>
            <person name="Berry K.J."/>
            <person name="Lee C."/>
            <person name="Mueller J."/>
            <person name="Khouri H.M."/>
            <person name="Gill J."/>
            <person name="Utterback T.R."/>
            <person name="McDonald L.A."/>
            <person name="Feldblyum T.V."/>
            <person name="Smith H.O."/>
            <person name="Venter J.C."/>
            <person name="Nealson K.H."/>
            <person name="Fraser C.M."/>
        </authorList>
    </citation>
    <scope>NUCLEOTIDE SEQUENCE [LARGE SCALE GENOMIC DNA]</scope>
    <source>
        <strain>ATCC 700550 / JCM 31522 / CIP 106686 / LMG 19005 / NCIMB 14063 / MR-1</strain>
    </source>
</reference>
<keyword id="KW-0050">Antiport</keyword>
<keyword id="KW-0997">Cell inner membrane</keyword>
<keyword id="KW-1003">Cell membrane</keyword>
<keyword id="KW-0406">Ion transport</keyword>
<keyword id="KW-0472">Membrane</keyword>
<keyword id="KW-1185">Reference proteome</keyword>
<keyword id="KW-0915">Sodium</keyword>
<keyword id="KW-0739">Sodium transport</keyword>
<keyword id="KW-0812">Transmembrane</keyword>
<keyword id="KW-1133">Transmembrane helix</keyword>
<keyword id="KW-0813">Transport</keyword>
<name>NHAB_SHEON</name>
<comment type="function">
    <text evidence="1">Na(+)/H(+) antiporter that extrudes sodium in exchange for external protons.</text>
</comment>
<comment type="catalytic activity">
    <reaction evidence="1">
        <text>2 Na(+)(in) + 3 H(+)(out) = 2 Na(+)(out) + 3 H(+)(in)</text>
        <dbReference type="Rhea" id="RHEA:29247"/>
        <dbReference type="ChEBI" id="CHEBI:15378"/>
        <dbReference type="ChEBI" id="CHEBI:29101"/>
    </reaction>
    <physiologicalReaction direction="left-to-right" evidence="1">
        <dbReference type="Rhea" id="RHEA:29248"/>
    </physiologicalReaction>
</comment>
<comment type="subcellular location">
    <subcellularLocation>
        <location evidence="1">Cell inner membrane</location>
        <topology evidence="1">Multi-pass membrane protein</topology>
    </subcellularLocation>
</comment>
<comment type="similarity">
    <text evidence="1">Belongs to the NhaB Na(+)/H(+) (TC 2.A.34) antiporter family.</text>
</comment>
<organism>
    <name type="scientific">Shewanella oneidensis (strain ATCC 700550 / JCM 31522 / CIP 106686 / LMG 19005 / NCIMB 14063 / MR-1)</name>
    <dbReference type="NCBI Taxonomy" id="211586"/>
    <lineage>
        <taxon>Bacteria</taxon>
        <taxon>Pseudomonadati</taxon>
        <taxon>Pseudomonadota</taxon>
        <taxon>Gammaproteobacteria</taxon>
        <taxon>Alteromonadales</taxon>
        <taxon>Shewanellaceae</taxon>
        <taxon>Shewanella</taxon>
    </lineage>
</organism>
<gene>
    <name evidence="1" type="primary">nhaB</name>
    <name type="ordered locus">SO_2886</name>
</gene>
<evidence type="ECO:0000255" key="1">
    <source>
        <dbReference type="HAMAP-Rule" id="MF_01599"/>
    </source>
</evidence>
<dbReference type="EMBL" id="AE014299">
    <property type="protein sequence ID" value="AAN55902.1"/>
    <property type="molecule type" value="Genomic_DNA"/>
</dbReference>
<dbReference type="RefSeq" id="NP_718458.1">
    <property type="nucleotide sequence ID" value="NC_004347.2"/>
</dbReference>
<dbReference type="RefSeq" id="WP_011072797.1">
    <property type="nucleotide sequence ID" value="NC_004347.2"/>
</dbReference>
<dbReference type="SMR" id="Q8ED79"/>
<dbReference type="STRING" id="211586.SO_2886"/>
<dbReference type="PaxDb" id="211586-SO_2886"/>
<dbReference type="KEGG" id="son:SO_2886"/>
<dbReference type="PATRIC" id="fig|211586.12.peg.2785"/>
<dbReference type="eggNOG" id="COG3067">
    <property type="taxonomic scope" value="Bacteria"/>
</dbReference>
<dbReference type="HOGENOM" id="CLU_041110_0_0_6"/>
<dbReference type="OrthoDB" id="5288732at2"/>
<dbReference type="PhylomeDB" id="Q8ED79"/>
<dbReference type="BioCyc" id="SONE211586:G1GMP-2664-MONOMER"/>
<dbReference type="Proteomes" id="UP000008186">
    <property type="component" value="Chromosome"/>
</dbReference>
<dbReference type="GO" id="GO:0005886">
    <property type="term" value="C:plasma membrane"/>
    <property type="evidence" value="ECO:0000318"/>
    <property type="project" value="GO_Central"/>
</dbReference>
<dbReference type="GO" id="GO:0015385">
    <property type="term" value="F:sodium:proton antiporter activity"/>
    <property type="evidence" value="ECO:0000318"/>
    <property type="project" value="GO_Central"/>
</dbReference>
<dbReference type="HAMAP" id="MF_01599">
    <property type="entry name" value="NhaB"/>
    <property type="match status" value="1"/>
</dbReference>
<dbReference type="InterPro" id="IPR004671">
    <property type="entry name" value="Na+/H+_antiporter_NhaB"/>
</dbReference>
<dbReference type="NCBIfam" id="TIGR00774">
    <property type="entry name" value="NhaB"/>
    <property type="match status" value="1"/>
</dbReference>
<dbReference type="NCBIfam" id="NF007093">
    <property type="entry name" value="PRK09547.1"/>
    <property type="match status" value="1"/>
</dbReference>
<dbReference type="PANTHER" id="PTHR43302:SF1">
    <property type="entry name" value="NA(+)_H(+) ANTIPORTER NHAB"/>
    <property type="match status" value="1"/>
</dbReference>
<dbReference type="PANTHER" id="PTHR43302">
    <property type="entry name" value="TRANSPORTER ARSB-RELATED"/>
    <property type="match status" value="1"/>
</dbReference>
<dbReference type="Pfam" id="PF06450">
    <property type="entry name" value="NhaB"/>
    <property type="match status" value="1"/>
</dbReference>